<reference key="1">
    <citation type="journal article" date="2007" name="PLoS Genet.">
        <title>The complete genome sequence of Yersinia pseudotuberculosis IP31758, the causative agent of Far East scarlet-like fever.</title>
        <authorList>
            <person name="Eppinger M."/>
            <person name="Rosovitz M.J."/>
            <person name="Fricke W.F."/>
            <person name="Rasko D.A."/>
            <person name="Kokorina G."/>
            <person name="Fayolle C."/>
            <person name="Lindler L.E."/>
            <person name="Carniel E."/>
            <person name="Ravel J."/>
        </authorList>
    </citation>
    <scope>NUCLEOTIDE SEQUENCE [LARGE SCALE GENOMIC DNA]</scope>
    <source>
        <strain>IP 31758</strain>
    </source>
</reference>
<protein>
    <recommendedName>
        <fullName evidence="1">Probable septum site-determining protein MinC</fullName>
    </recommendedName>
</protein>
<dbReference type="EMBL" id="CP000720">
    <property type="protein sequence ID" value="ABS45883.1"/>
    <property type="molecule type" value="Genomic_DNA"/>
</dbReference>
<dbReference type="RefSeq" id="WP_002220631.1">
    <property type="nucleotide sequence ID" value="NC_009708.1"/>
</dbReference>
<dbReference type="SMR" id="A7FIA5"/>
<dbReference type="GeneID" id="96665552"/>
<dbReference type="KEGG" id="ypi:YpsIP31758_2010"/>
<dbReference type="HOGENOM" id="CLU_067812_0_1_6"/>
<dbReference type="Proteomes" id="UP000002412">
    <property type="component" value="Chromosome"/>
</dbReference>
<dbReference type="GO" id="GO:0000902">
    <property type="term" value="P:cell morphogenesis"/>
    <property type="evidence" value="ECO:0007669"/>
    <property type="project" value="InterPro"/>
</dbReference>
<dbReference type="GO" id="GO:0000917">
    <property type="term" value="P:division septum assembly"/>
    <property type="evidence" value="ECO:0007669"/>
    <property type="project" value="UniProtKB-KW"/>
</dbReference>
<dbReference type="GO" id="GO:0051302">
    <property type="term" value="P:regulation of cell division"/>
    <property type="evidence" value="ECO:0007669"/>
    <property type="project" value="InterPro"/>
</dbReference>
<dbReference type="GO" id="GO:1901891">
    <property type="term" value="P:regulation of cell septum assembly"/>
    <property type="evidence" value="ECO:0007669"/>
    <property type="project" value="InterPro"/>
</dbReference>
<dbReference type="FunFam" id="2.160.20.70:FF:000002">
    <property type="entry name" value="Probable septum site-determining protein MinC"/>
    <property type="match status" value="1"/>
</dbReference>
<dbReference type="Gene3D" id="2.160.20.70">
    <property type="match status" value="1"/>
</dbReference>
<dbReference type="Gene3D" id="3.30.70.260">
    <property type="match status" value="1"/>
</dbReference>
<dbReference type="HAMAP" id="MF_00267">
    <property type="entry name" value="MinC"/>
    <property type="match status" value="1"/>
</dbReference>
<dbReference type="InterPro" id="IPR016098">
    <property type="entry name" value="CAP/MinC_C"/>
</dbReference>
<dbReference type="InterPro" id="IPR013033">
    <property type="entry name" value="MinC"/>
</dbReference>
<dbReference type="InterPro" id="IPR036145">
    <property type="entry name" value="MinC_C_sf"/>
</dbReference>
<dbReference type="InterPro" id="IPR007874">
    <property type="entry name" value="MinC_N"/>
</dbReference>
<dbReference type="InterPro" id="IPR005526">
    <property type="entry name" value="Septum_form_inhib_MinC_C"/>
</dbReference>
<dbReference type="NCBIfam" id="TIGR01222">
    <property type="entry name" value="minC"/>
    <property type="match status" value="1"/>
</dbReference>
<dbReference type="PANTHER" id="PTHR34108">
    <property type="entry name" value="SEPTUM SITE-DETERMINING PROTEIN MINC"/>
    <property type="match status" value="1"/>
</dbReference>
<dbReference type="PANTHER" id="PTHR34108:SF1">
    <property type="entry name" value="SEPTUM SITE-DETERMINING PROTEIN MINC"/>
    <property type="match status" value="1"/>
</dbReference>
<dbReference type="Pfam" id="PF03775">
    <property type="entry name" value="MinC_C"/>
    <property type="match status" value="1"/>
</dbReference>
<dbReference type="Pfam" id="PF05209">
    <property type="entry name" value="MinC_N"/>
    <property type="match status" value="1"/>
</dbReference>
<dbReference type="SUPFAM" id="SSF63848">
    <property type="entry name" value="Cell-division inhibitor MinC, C-terminal domain"/>
    <property type="match status" value="1"/>
</dbReference>
<proteinExistence type="inferred from homology"/>
<sequence length="228" mass="24546">MSQSPIELKGSSFTLSVVHLHDSRPEVIRQALQEKVDQAPAFLKNAPVVINVATLPNGANWKDLQQAVTSAGLRIVGISGCQDERQKRAIARAGLPLLSEGKGQKLAPEPVISPPENVPTQTRIINTPVRSGQQIYARNCDLIVISSVSAGAELIADGNIHIYGMMRGRALAGASGDAKCQIFCTHLGAELVSIAGQYWLSDQIPLEYFGQAARLYLQDNTLTIQPLN</sequence>
<keyword id="KW-0131">Cell cycle</keyword>
<keyword id="KW-0132">Cell division</keyword>
<keyword id="KW-0717">Septation</keyword>
<accession>A7FIA5</accession>
<organism>
    <name type="scientific">Yersinia pseudotuberculosis serotype O:1b (strain IP 31758)</name>
    <dbReference type="NCBI Taxonomy" id="349747"/>
    <lineage>
        <taxon>Bacteria</taxon>
        <taxon>Pseudomonadati</taxon>
        <taxon>Pseudomonadota</taxon>
        <taxon>Gammaproteobacteria</taxon>
        <taxon>Enterobacterales</taxon>
        <taxon>Yersiniaceae</taxon>
        <taxon>Yersinia</taxon>
    </lineage>
</organism>
<evidence type="ECO:0000255" key="1">
    <source>
        <dbReference type="HAMAP-Rule" id="MF_00267"/>
    </source>
</evidence>
<name>MINC_YERP3</name>
<feature type="chain" id="PRO_1000059120" description="Probable septum site-determining protein MinC">
    <location>
        <begin position="1"/>
        <end position="228"/>
    </location>
</feature>
<comment type="function">
    <text evidence="1">Cell division inhibitor that blocks the formation of polar Z ring septums. Rapidly oscillates between the poles of the cell to destabilize FtsZ filaments that have formed before they mature into polar Z rings. Prevents FtsZ polymerization.</text>
</comment>
<comment type="subunit">
    <text evidence="1">Interacts with MinD and FtsZ.</text>
</comment>
<comment type="similarity">
    <text evidence="1">Belongs to the MinC family.</text>
</comment>
<gene>
    <name evidence="1" type="primary">minC</name>
    <name type="ordered locus">YpsIP31758_2010</name>
</gene>